<feature type="chain" id="PRO_1000001889" description="Glutamate--tRNA ligase">
    <location>
        <begin position="1"/>
        <end position="471"/>
    </location>
</feature>
<feature type="short sequence motif" description="'HIGH' region" evidence="1">
    <location>
        <begin position="9"/>
        <end position="19"/>
    </location>
</feature>
<feature type="short sequence motif" description="'KMSKS' region" evidence="1">
    <location>
        <begin position="237"/>
        <end position="241"/>
    </location>
</feature>
<feature type="binding site" evidence="1">
    <location>
        <position position="98"/>
    </location>
    <ligand>
        <name>Zn(2+)</name>
        <dbReference type="ChEBI" id="CHEBI:29105"/>
    </ligand>
</feature>
<feature type="binding site" evidence="1">
    <location>
        <position position="100"/>
    </location>
    <ligand>
        <name>Zn(2+)</name>
        <dbReference type="ChEBI" id="CHEBI:29105"/>
    </ligand>
</feature>
<feature type="binding site" evidence="1">
    <location>
        <position position="125"/>
    </location>
    <ligand>
        <name>Zn(2+)</name>
        <dbReference type="ChEBI" id="CHEBI:29105"/>
    </ligand>
</feature>
<feature type="binding site" evidence="1">
    <location>
        <position position="127"/>
    </location>
    <ligand>
        <name>Zn(2+)</name>
        <dbReference type="ChEBI" id="CHEBI:29105"/>
    </ligand>
</feature>
<feature type="binding site" evidence="1">
    <location>
        <position position="240"/>
    </location>
    <ligand>
        <name>ATP</name>
        <dbReference type="ChEBI" id="CHEBI:30616"/>
    </ligand>
</feature>
<protein>
    <recommendedName>
        <fullName evidence="1">Glutamate--tRNA ligase</fullName>
        <ecNumber evidence="1">6.1.1.17</ecNumber>
    </recommendedName>
    <alternativeName>
        <fullName evidence="1">Glutamyl-tRNA synthetase</fullName>
        <shortName evidence="1">GluRS</shortName>
    </alternativeName>
</protein>
<reference key="1">
    <citation type="submission" date="2007-08" db="EMBL/GenBank/DDBJ databases">
        <authorList>
            <consortium name="The Citrobacter koseri Genome Sequencing Project"/>
            <person name="McClelland M."/>
            <person name="Sanderson E.K."/>
            <person name="Porwollik S."/>
            <person name="Spieth J."/>
            <person name="Clifton W.S."/>
            <person name="Latreille P."/>
            <person name="Courtney L."/>
            <person name="Wang C."/>
            <person name="Pepin K."/>
            <person name="Bhonagiri V."/>
            <person name="Nash W."/>
            <person name="Johnson M."/>
            <person name="Thiruvilangam P."/>
            <person name="Wilson R."/>
        </authorList>
    </citation>
    <scope>NUCLEOTIDE SEQUENCE [LARGE SCALE GENOMIC DNA]</scope>
    <source>
        <strain>ATCC BAA-895 / CDC 4225-83 / SGSC4696</strain>
    </source>
</reference>
<gene>
    <name evidence="1" type="primary">gltX</name>
    <name type="ordered locus">CKO_00396</name>
</gene>
<name>SYE_CITK8</name>
<dbReference type="EC" id="6.1.1.17" evidence="1"/>
<dbReference type="EMBL" id="CP000822">
    <property type="protein sequence ID" value="ABV11555.1"/>
    <property type="molecule type" value="Genomic_DNA"/>
</dbReference>
<dbReference type="RefSeq" id="WP_012131382.1">
    <property type="nucleotide sequence ID" value="NC_009792.1"/>
</dbReference>
<dbReference type="SMR" id="A8ADJ2"/>
<dbReference type="STRING" id="290338.CKO_00396"/>
<dbReference type="GeneID" id="45134658"/>
<dbReference type="KEGG" id="cko:CKO_00396"/>
<dbReference type="HOGENOM" id="CLU_015768_6_0_6"/>
<dbReference type="OrthoDB" id="9807503at2"/>
<dbReference type="Proteomes" id="UP000008148">
    <property type="component" value="Chromosome"/>
</dbReference>
<dbReference type="GO" id="GO:0005829">
    <property type="term" value="C:cytosol"/>
    <property type="evidence" value="ECO:0007669"/>
    <property type="project" value="TreeGrafter"/>
</dbReference>
<dbReference type="GO" id="GO:0005524">
    <property type="term" value="F:ATP binding"/>
    <property type="evidence" value="ECO:0007669"/>
    <property type="project" value="UniProtKB-UniRule"/>
</dbReference>
<dbReference type="GO" id="GO:0004818">
    <property type="term" value="F:glutamate-tRNA ligase activity"/>
    <property type="evidence" value="ECO:0007669"/>
    <property type="project" value="UniProtKB-UniRule"/>
</dbReference>
<dbReference type="GO" id="GO:0000049">
    <property type="term" value="F:tRNA binding"/>
    <property type="evidence" value="ECO:0007669"/>
    <property type="project" value="InterPro"/>
</dbReference>
<dbReference type="GO" id="GO:0008270">
    <property type="term" value="F:zinc ion binding"/>
    <property type="evidence" value="ECO:0007669"/>
    <property type="project" value="UniProtKB-UniRule"/>
</dbReference>
<dbReference type="GO" id="GO:0006424">
    <property type="term" value="P:glutamyl-tRNA aminoacylation"/>
    <property type="evidence" value="ECO:0007669"/>
    <property type="project" value="UniProtKB-UniRule"/>
</dbReference>
<dbReference type="CDD" id="cd00808">
    <property type="entry name" value="GluRS_core"/>
    <property type="match status" value="1"/>
</dbReference>
<dbReference type="FunFam" id="1.10.10.350:FF:000001">
    <property type="entry name" value="Glutamate--tRNA ligase"/>
    <property type="match status" value="1"/>
</dbReference>
<dbReference type="FunFam" id="3.40.50.620:FF:000007">
    <property type="entry name" value="Glutamate--tRNA ligase"/>
    <property type="match status" value="1"/>
</dbReference>
<dbReference type="Gene3D" id="1.10.10.350">
    <property type="match status" value="1"/>
</dbReference>
<dbReference type="Gene3D" id="3.40.50.620">
    <property type="entry name" value="HUPs"/>
    <property type="match status" value="1"/>
</dbReference>
<dbReference type="HAMAP" id="MF_00022">
    <property type="entry name" value="Glu_tRNA_synth_type1"/>
    <property type="match status" value="1"/>
</dbReference>
<dbReference type="InterPro" id="IPR045462">
    <property type="entry name" value="aa-tRNA-synth_I_cd-bd"/>
</dbReference>
<dbReference type="InterPro" id="IPR020751">
    <property type="entry name" value="aa-tRNA-synth_I_codon-bd_sub2"/>
</dbReference>
<dbReference type="InterPro" id="IPR001412">
    <property type="entry name" value="aa-tRNA-synth_I_CS"/>
</dbReference>
<dbReference type="InterPro" id="IPR008925">
    <property type="entry name" value="aa_tRNA-synth_I_cd-bd_sf"/>
</dbReference>
<dbReference type="InterPro" id="IPR004527">
    <property type="entry name" value="Glu-tRNA-ligase_bac/mito"/>
</dbReference>
<dbReference type="InterPro" id="IPR000924">
    <property type="entry name" value="Glu/Gln-tRNA-synth"/>
</dbReference>
<dbReference type="InterPro" id="IPR020058">
    <property type="entry name" value="Glu/Gln-tRNA-synth_Ib_cat-dom"/>
</dbReference>
<dbReference type="InterPro" id="IPR049940">
    <property type="entry name" value="GluQ/Sye"/>
</dbReference>
<dbReference type="InterPro" id="IPR033910">
    <property type="entry name" value="GluRS_core"/>
</dbReference>
<dbReference type="InterPro" id="IPR014729">
    <property type="entry name" value="Rossmann-like_a/b/a_fold"/>
</dbReference>
<dbReference type="NCBIfam" id="TIGR00464">
    <property type="entry name" value="gltX_bact"/>
    <property type="match status" value="1"/>
</dbReference>
<dbReference type="PANTHER" id="PTHR43311">
    <property type="entry name" value="GLUTAMATE--TRNA LIGASE"/>
    <property type="match status" value="1"/>
</dbReference>
<dbReference type="PANTHER" id="PTHR43311:SF2">
    <property type="entry name" value="GLUTAMATE--TRNA LIGASE, MITOCHONDRIAL-RELATED"/>
    <property type="match status" value="1"/>
</dbReference>
<dbReference type="Pfam" id="PF19269">
    <property type="entry name" value="Anticodon_2"/>
    <property type="match status" value="1"/>
</dbReference>
<dbReference type="Pfam" id="PF00749">
    <property type="entry name" value="tRNA-synt_1c"/>
    <property type="match status" value="1"/>
</dbReference>
<dbReference type="PRINTS" id="PR00987">
    <property type="entry name" value="TRNASYNTHGLU"/>
</dbReference>
<dbReference type="SUPFAM" id="SSF48163">
    <property type="entry name" value="An anticodon-binding domain of class I aminoacyl-tRNA synthetases"/>
    <property type="match status" value="1"/>
</dbReference>
<dbReference type="SUPFAM" id="SSF52374">
    <property type="entry name" value="Nucleotidylyl transferase"/>
    <property type="match status" value="1"/>
</dbReference>
<dbReference type="PROSITE" id="PS00178">
    <property type="entry name" value="AA_TRNA_LIGASE_I"/>
    <property type="match status" value="1"/>
</dbReference>
<comment type="function">
    <text evidence="1">Catalyzes the attachment of glutamate to tRNA(Glu) in a two-step reaction: glutamate is first activated by ATP to form Glu-AMP and then transferred to the acceptor end of tRNA(Glu).</text>
</comment>
<comment type="catalytic activity">
    <reaction evidence="1">
        <text>tRNA(Glu) + L-glutamate + ATP = L-glutamyl-tRNA(Glu) + AMP + diphosphate</text>
        <dbReference type="Rhea" id="RHEA:23540"/>
        <dbReference type="Rhea" id="RHEA-COMP:9663"/>
        <dbReference type="Rhea" id="RHEA-COMP:9680"/>
        <dbReference type="ChEBI" id="CHEBI:29985"/>
        <dbReference type="ChEBI" id="CHEBI:30616"/>
        <dbReference type="ChEBI" id="CHEBI:33019"/>
        <dbReference type="ChEBI" id="CHEBI:78442"/>
        <dbReference type="ChEBI" id="CHEBI:78520"/>
        <dbReference type="ChEBI" id="CHEBI:456215"/>
        <dbReference type="EC" id="6.1.1.17"/>
    </reaction>
</comment>
<comment type="cofactor">
    <cofactor evidence="1">
        <name>Zn(2+)</name>
        <dbReference type="ChEBI" id="CHEBI:29105"/>
    </cofactor>
    <text evidence="1">Binds 1 zinc ion per subunit.</text>
</comment>
<comment type="subunit">
    <text evidence="1">Monomer.</text>
</comment>
<comment type="subcellular location">
    <subcellularLocation>
        <location evidence="1">Cytoplasm</location>
    </subcellularLocation>
</comment>
<comment type="similarity">
    <text evidence="1">Belongs to the class-I aminoacyl-tRNA synthetase family. Glutamate--tRNA ligase type 1 subfamily.</text>
</comment>
<proteinExistence type="inferred from homology"/>
<evidence type="ECO:0000255" key="1">
    <source>
        <dbReference type="HAMAP-Rule" id="MF_00022"/>
    </source>
</evidence>
<organism>
    <name type="scientific">Citrobacter koseri (strain ATCC BAA-895 / CDC 4225-83 / SGSC4696)</name>
    <dbReference type="NCBI Taxonomy" id="290338"/>
    <lineage>
        <taxon>Bacteria</taxon>
        <taxon>Pseudomonadati</taxon>
        <taxon>Pseudomonadota</taxon>
        <taxon>Gammaproteobacteria</taxon>
        <taxon>Enterobacterales</taxon>
        <taxon>Enterobacteriaceae</taxon>
        <taxon>Citrobacter</taxon>
    </lineage>
</organism>
<keyword id="KW-0030">Aminoacyl-tRNA synthetase</keyword>
<keyword id="KW-0067">ATP-binding</keyword>
<keyword id="KW-0963">Cytoplasm</keyword>
<keyword id="KW-0436">Ligase</keyword>
<keyword id="KW-0479">Metal-binding</keyword>
<keyword id="KW-0547">Nucleotide-binding</keyword>
<keyword id="KW-0648">Protein biosynthesis</keyword>
<keyword id="KW-1185">Reference proteome</keyword>
<keyword id="KW-0862">Zinc</keyword>
<accession>A8ADJ2</accession>
<sequence length="471" mass="53536">MKIKTRFAPSPTGYLHVGGARTALYSWLFARNHGGEFVLRIEDTDLERSTPEAIEAIMDGMNWLSLEWDEGPYFQTKRFDRYNAVIDEMLEAGTAYKCYCSKERLEALREEQMAKGEKPRYDGRCRHGHEHHSDDEPCVVRFANPQDGSVIFDDQIRGSIEFSNQELDDLIIRRTDGSPTYNFCVVVDDWDMEITHVIRGEDHINNTPRQINILKALNAPVPVYAHVSMINGDDGKKLSKRHGAVSVMQYRDDGYLPEALLNYLVRLGWSSGDQEIFTREEMIKLFSLNAVSKSASAFNTDKLLWLNHHYINSLAPEYVATHLQWHIEQENIDTRNGPQLAELVKLLGERCKTLKEMAQSCRYFYEDFAEFDADAAKKHLRPVARQPLEVVRDKLAAITEWSAENVHHAIQATADELEVGMGKVGMPLRVAVTGAGQSPALDVTVHAIGKSRSIERINKALAFIAERENQQ</sequence>